<accession>P51295</accession>
<keyword id="KW-0150">Chloroplast</keyword>
<keyword id="KW-0934">Plastid</keyword>
<keyword id="KW-0687">Ribonucleoprotein</keyword>
<keyword id="KW-0689">Ribosomal protein</keyword>
<keyword id="KW-0694">RNA-binding</keyword>
<keyword id="KW-0699">rRNA-binding</keyword>
<feature type="chain" id="PRO_0000132201" description="Small ribosomal subunit protein uS13c">
    <location>
        <begin position="1"/>
        <end position="126"/>
    </location>
</feature>
<feature type="region of interest" description="Disordered" evidence="2">
    <location>
        <begin position="97"/>
        <end position="126"/>
    </location>
</feature>
<feature type="compositionally biased region" description="Basic residues" evidence="2">
    <location>
        <begin position="101"/>
        <end position="126"/>
    </location>
</feature>
<gene>
    <name evidence="1" type="primary">rps13</name>
</gene>
<proteinExistence type="inferred from homology"/>
<name>RR13_PORPU</name>
<evidence type="ECO:0000255" key="1">
    <source>
        <dbReference type="HAMAP-Rule" id="MF_01315"/>
    </source>
</evidence>
<evidence type="ECO:0000256" key="2">
    <source>
        <dbReference type="SAM" id="MobiDB-lite"/>
    </source>
</evidence>
<evidence type="ECO:0000305" key="3"/>
<comment type="function">
    <text evidence="1">Located at the top of the head of the 30S subunit, it contacts several helices of the 16S rRNA.</text>
</comment>
<comment type="subunit">
    <text>Part of the 30S ribosomal subunit.</text>
</comment>
<comment type="subcellular location">
    <subcellularLocation>
        <location>Plastid</location>
        <location>Chloroplast</location>
    </subcellularLocation>
</comment>
<comment type="similarity">
    <text evidence="1">Belongs to the universal ribosomal protein uS13 family.</text>
</comment>
<reference key="1">
    <citation type="journal article" date="1995" name="Plant Mol. Biol. Rep.">
        <title>Complete nucleotide sequence of the Porphyra purpurea chloroplast genome.</title>
        <authorList>
            <person name="Reith M.E."/>
            <person name="Munholland J."/>
        </authorList>
    </citation>
    <scope>NUCLEOTIDE SEQUENCE [LARGE SCALE GENOMIC DNA]</scope>
    <source>
        <strain>Avonport</strain>
    </source>
</reference>
<dbReference type="EMBL" id="U38804">
    <property type="protein sequence ID" value="AAC08181.1"/>
    <property type="molecule type" value="Genomic_DNA"/>
</dbReference>
<dbReference type="PIR" id="S73216">
    <property type="entry name" value="S73216"/>
</dbReference>
<dbReference type="RefSeq" id="NP_053905.1">
    <property type="nucleotide sequence ID" value="NC_000925.1"/>
</dbReference>
<dbReference type="SMR" id="P51295"/>
<dbReference type="GeneID" id="809924"/>
<dbReference type="GO" id="GO:0009507">
    <property type="term" value="C:chloroplast"/>
    <property type="evidence" value="ECO:0007669"/>
    <property type="project" value="UniProtKB-SubCell"/>
</dbReference>
<dbReference type="GO" id="GO:0005829">
    <property type="term" value="C:cytosol"/>
    <property type="evidence" value="ECO:0007669"/>
    <property type="project" value="TreeGrafter"/>
</dbReference>
<dbReference type="GO" id="GO:0015935">
    <property type="term" value="C:small ribosomal subunit"/>
    <property type="evidence" value="ECO:0007669"/>
    <property type="project" value="TreeGrafter"/>
</dbReference>
<dbReference type="GO" id="GO:0019843">
    <property type="term" value="F:rRNA binding"/>
    <property type="evidence" value="ECO:0007669"/>
    <property type="project" value="UniProtKB-UniRule"/>
</dbReference>
<dbReference type="GO" id="GO:0003735">
    <property type="term" value="F:structural constituent of ribosome"/>
    <property type="evidence" value="ECO:0007669"/>
    <property type="project" value="InterPro"/>
</dbReference>
<dbReference type="GO" id="GO:0006412">
    <property type="term" value="P:translation"/>
    <property type="evidence" value="ECO:0007669"/>
    <property type="project" value="UniProtKB-UniRule"/>
</dbReference>
<dbReference type="FunFam" id="1.10.8.50:FF:000001">
    <property type="entry name" value="30S ribosomal protein S13"/>
    <property type="match status" value="1"/>
</dbReference>
<dbReference type="FunFam" id="4.10.910.10:FF:000001">
    <property type="entry name" value="30S ribosomal protein S13"/>
    <property type="match status" value="1"/>
</dbReference>
<dbReference type="Gene3D" id="1.10.8.50">
    <property type="match status" value="1"/>
</dbReference>
<dbReference type="Gene3D" id="4.10.910.10">
    <property type="entry name" value="30s ribosomal protein s13, domain 2"/>
    <property type="match status" value="1"/>
</dbReference>
<dbReference type="HAMAP" id="MF_01315">
    <property type="entry name" value="Ribosomal_uS13"/>
    <property type="match status" value="1"/>
</dbReference>
<dbReference type="InterPro" id="IPR027437">
    <property type="entry name" value="Rbsml_uS13_C"/>
</dbReference>
<dbReference type="InterPro" id="IPR001892">
    <property type="entry name" value="Ribosomal_uS13"/>
</dbReference>
<dbReference type="InterPro" id="IPR010979">
    <property type="entry name" value="Ribosomal_uS13-like_H2TH"/>
</dbReference>
<dbReference type="InterPro" id="IPR019980">
    <property type="entry name" value="Ribosomal_uS13_bac-type"/>
</dbReference>
<dbReference type="InterPro" id="IPR018269">
    <property type="entry name" value="Ribosomal_uS13_CS"/>
</dbReference>
<dbReference type="NCBIfam" id="TIGR03631">
    <property type="entry name" value="uS13_bact"/>
    <property type="match status" value="1"/>
</dbReference>
<dbReference type="PANTHER" id="PTHR10871">
    <property type="entry name" value="30S RIBOSOMAL PROTEIN S13/40S RIBOSOMAL PROTEIN S18"/>
    <property type="match status" value="1"/>
</dbReference>
<dbReference type="PANTHER" id="PTHR10871:SF1">
    <property type="entry name" value="SMALL RIBOSOMAL SUBUNIT PROTEIN US13M"/>
    <property type="match status" value="1"/>
</dbReference>
<dbReference type="Pfam" id="PF00416">
    <property type="entry name" value="Ribosomal_S13"/>
    <property type="match status" value="1"/>
</dbReference>
<dbReference type="PIRSF" id="PIRSF002134">
    <property type="entry name" value="Ribosomal_S13"/>
    <property type="match status" value="1"/>
</dbReference>
<dbReference type="SUPFAM" id="SSF46946">
    <property type="entry name" value="S13-like H2TH domain"/>
    <property type="match status" value="1"/>
</dbReference>
<dbReference type="PROSITE" id="PS00646">
    <property type="entry name" value="RIBOSOMAL_S13_1"/>
    <property type="match status" value="1"/>
</dbReference>
<dbReference type="PROSITE" id="PS50159">
    <property type="entry name" value="RIBOSOMAL_S13_2"/>
    <property type="match status" value="1"/>
</dbReference>
<sequence length="126" mass="14538">MARIAGVDLPRNKRIEIALTYIYGIGLSRSKEILKKTNIDADIRCQNLNDQQIVSIREILESSYQIEGDLKRFESMSIKRLMEISTYRGRRHRLGLPLRGQRTRTNARTRRGGKKTVAGKKKAPRK</sequence>
<geneLocation type="chloroplast"/>
<organism>
    <name type="scientific">Porphyra purpurea</name>
    <name type="common">Red seaweed</name>
    <name type="synonym">Ulva purpurea</name>
    <dbReference type="NCBI Taxonomy" id="2787"/>
    <lineage>
        <taxon>Eukaryota</taxon>
        <taxon>Rhodophyta</taxon>
        <taxon>Bangiophyceae</taxon>
        <taxon>Bangiales</taxon>
        <taxon>Bangiaceae</taxon>
        <taxon>Porphyra</taxon>
    </lineage>
</organism>
<protein>
    <recommendedName>
        <fullName evidence="1">Small ribosomal subunit protein uS13c</fullName>
    </recommendedName>
    <alternativeName>
        <fullName evidence="3">30S ribosomal protein S13, chloroplastic</fullName>
    </alternativeName>
</protein>